<name>VE7_BPV3</name>
<reference key="1">
    <citation type="journal article" date="2002" name="J. Virol.">
        <title>Lack of canonical E6 and E7 open reading frames in bird papillomaviruses: Fringilla coelebs papillomavirus and Psittacus erithacus timneh papillomavirus.</title>
        <authorList>
            <person name="Terai M."/>
            <person name="DeSalle R."/>
            <person name="Burk R.D."/>
        </authorList>
    </citation>
    <scope>NUCLEOTIDE SEQUENCE [GENOMIC DNA]</scope>
</reference>
<reference key="2">
    <citation type="submission" date="2004-01" db="EMBL/GenBank/DDBJ databases">
        <title>Sequencing of the complete genomes of BPV 3, BPV 5 and BPV 6.</title>
        <authorList>
            <person name="Delius H."/>
            <person name="de Villiers E.M."/>
        </authorList>
    </citation>
    <scope>NUCLEOTIDE SEQUENCE [GENOMIC DNA]</scope>
</reference>
<keyword id="KW-0010">Activator</keyword>
<keyword id="KW-0238">DNA-binding</keyword>
<keyword id="KW-0244">Early protein</keyword>
<keyword id="KW-1078">G1/S host cell cycle checkpoint dysregulation by virus</keyword>
<keyword id="KW-1035">Host cytoplasm</keyword>
<keyword id="KW-1048">Host nucleus</keyword>
<keyword id="KW-0945">Host-virus interaction</keyword>
<keyword id="KW-1090">Inhibition of host innate immune response by virus</keyword>
<keyword id="KW-1114">Inhibition of host interferon signaling pathway by virus</keyword>
<keyword id="KW-0922">Interferon antiviral system evasion</keyword>
<keyword id="KW-0479">Metal-binding</keyword>
<keyword id="KW-1121">Modulation of host cell cycle by virus</keyword>
<keyword id="KW-0553">Oncogene</keyword>
<keyword id="KW-1185">Reference proteome</keyword>
<keyword id="KW-0804">Transcription</keyword>
<keyword id="KW-0805">Transcription regulation</keyword>
<keyword id="KW-0899">Viral immunoevasion</keyword>
<keyword id="KW-0862">Zinc</keyword>
<keyword id="KW-0863">Zinc-finger</keyword>
<organism>
    <name type="scientific">Bovine papillomavirus type 3</name>
    <dbReference type="NCBI Taxonomy" id="2758957"/>
    <lineage>
        <taxon>Viruses</taxon>
        <taxon>Monodnaviria</taxon>
        <taxon>Shotokuvirae</taxon>
        <taxon>Cossaviricota</taxon>
        <taxon>Papovaviricetes</taxon>
        <taxon>Zurhausenvirales</taxon>
        <taxon>Papillomaviridae</taxon>
        <taxon>Firstpapillomavirinae</taxon>
        <taxon>Xipapillomavirus</taxon>
        <taxon>Xipapillomavirus 1</taxon>
    </lineage>
</organism>
<gene>
    <name evidence="1" type="primary">E7</name>
</gene>
<feature type="chain" id="PRO_0000133394" description="Protein E7">
    <location>
        <begin position="1"/>
        <end position="98"/>
    </location>
</feature>
<feature type="zinc finger region" evidence="1">
    <location>
        <begin position="47"/>
        <end position="83"/>
    </location>
</feature>
<feature type="region of interest" description="E7 terminal domain" evidence="1">
    <location>
        <begin position="1"/>
        <end position="37"/>
    </location>
</feature>
<feature type="short sequence motif" description="LXCXE motif; interaction with host RB1 and TMEM173/STING" evidence="1">
    <location>
        <begin position="24"/>
        <end position="28"/>
    </location>
</feature>
<feature type="short sequence motif" description="Nuclear export signal" evidence="1">
    <location>
        <begin position="65"/>
        <end position="73"/>
    </location>
</feature>
<protein>
    <recommendedName>
        <fullName evidence="1">Protein E7</fullName>
    </recommendedName>
</protein>
<comment type="function">
    <text evidence="1">Plays a role in viral genome replication by driving entry of quiescent cells into the cell cycle. Stimulation of progression from G1 to S phase allows the virus to efficiently use the cellular DNA replicating machinery to achieve viral genome replication. E7 protein has both transforming and trans-activating activities. Induces the disassembly of the E2F1 transcription factor from RB1, with subsequent transcriptional activation of E2F1-regulated S-phase genes. Interferes with host histone deacetylation mediated by HDAC1 and HDAC2, leading to transcription activation. Also plays a role in the inhibition of both antiviral and antiproliferative functions of host interferon alpha. Interaction with host TMEM173/STING impairs the ability of TMEM173/STING to sense cytosolic DNA and promote the production of type I interferon (IFN-alpha and IFN-beta).</text>
</comment>
<comment type="subunit">
    <text evidence="1">Homodimer. Homooligomer. Interacts with host RB1; this interaction induces dissociation of RB1-E2F1 complex thereby disrupting RB1 activity. Interacts with host EP300; this interaction represses EP300 transcriptional activity. Interacts with protein E2; this interaction inhibits E7 oncogenic activity. Interacts with host TMEM173/STING; this interaction impairs the ability of TMEM173/STING to sense cytosolic DNA and promote the production of type I interferon (IFN-alpha and IFN-beta).</text>
</comment>
<comment type="subcellular location">
    <subcellularLocation>
        <location evidence="1">Host cytoplasm</location>
    </subcellularLocation>
    <subcellularLocation>
        <location evidence="1">Host nucleus</location>
    </subcellularLocation>
    <text evidence="1">Predominantly found in the host nucleus.</text>
</comment>
<comment type="domain">
    <text evidence="1">The E7 terminal domain is an intrinsically disordered domain, whose flexibility and conformational transitions confer target adaptability to the oncoprotein. It allows adaptation to a variety of protein targets and exposes the PEST degradation sequence that regulates its turnover in the cell.</text>
</comment>
<comment type="PTM">
    <text evidence="1">Highly phosphorylated.</text>
</comment>
<comment type="similarity">
    <text evidence="1">Belongs to the papillomaviridae E7 protein family.</text>
</comment>
<evidence type="ECO:0000255" key="1">
    <source>
        <dbReference type="HAMAP-Rule" id="MF_04004"/>
    </source>
</evidence>
<accession>Q8BDD8</accession>
<sequence>MKGQDVTLKNVAVELEDVVSPIILDCEEEIETEEVDCPAPYAVEAVCYVCENPLRLALVSSPDGIHQLHQLLLDCISLLCANCSREVYSNRRPQRNGP</sequence>
<proteinExistence type="inferred from homology"/>
<dbReference type="EMBL" id="AF486184">
    <property type="protein sequence ID" value="AAN09956.1"/>
    <property type="molecule type" value="Genomic_DNA"/>
</dbReference>
<dbReference type="EMBL" id="AJ620207">
    <property type="protein sequence ID" value="CAF05678.1"/>
    <property type="molecule type" value="Genomic_DNA"/>
</dbReference>
<dbReference type="PIR" id="A61399">
    <property type="entry name" value="A61399"/>
</dbReference>
<dbReference type="RefSeq" id="NP_694446.1">
    <property type="nucleotide sequence ID" value="NC_004197.1"/>
</dbReference>
<dbReference type="SMR" id="Q8BDD8"/>
<dbReference type="GeneID" id="955383"/>
<dbReference type="KEGG" id="vg:955383"/>
<dbReference type="Proteomes" id="UP000006369">
    <property type="component" value="Genome"/>
</dbReference>
<dbReference type="Proteomes" id="UP000185274">
    <property type="component" value="Segment"/>
</dbReference>
<dbReference type="GO" id="GO:0030430">
    <property type="term" value="C:host cell cytoplasm"/>
    <property type="evidence" value="ECO:0007669"/>
    <property type="project" value="UniProtKB-SubCell"/>
</dbReference>
<dbReference type="GO" id="GO:0042025">
    <property type="term" value="C:host cell nucleus"/>
    <property type="evidence" value="ECO:0007669"/>
    <property type="project" value="UniProtKB-SubCell"/>
</dbReference>
<dbReference type="GO" id="GO:0003677">
    <property type="term" value="F:DNA binding"/>
    <property type="evidence" value="ECO:0007669"/>
    <property type="project" value="UniProtKB-UniRule"/>
</dbReference>
<dbReference type="GO" id="GO:0003700">
    <property type="term" value="F:DNA-binding transcription factor activity"/>
    <property type="evidence" value="ECO:0007669"/>
    <property type="project" value="UniProtKB-UniRule"/>
</dbReference>
<dbReference type="GO" id="GO:0019904">
    <property type="term" value="F:protein domain specific binding"/>
    <property type="evidence" value="ECO:0007669"/>
    <property type="project" value="UniProtKB-UniRule"/>
</dbReference>
<dbReference type="GO" id="GO:0008270">
    <property type="term" value="F:zinc ion binding"/>
    <property type="evidence" value="ECO:0007669"/>
    <property type="project" value="UniProtKB-KW"/>
</dbReference>
<dbReference type="GO" id="GO:0006351">
    <property type="term" value="P:DNA-templated transcription"/>
    <property type="evidence" value="ECO:0007669"/>
    <property type="project" value="UniProtKB-UniRule"/>
</dbReference>
<dbReference type="GO" id="GO:0039645">
    <property type="term" value="P:symbiont-mediated perturbation of host cell cycle G1/S transition checkpoint"/>
    <property type="evidence" value="ECO:0007669"/>
    <property type="project" value="UniProtKB-UniRule"/>
</dbReference>
<dbReference type="GO" id="GO:0052170">
    <property type="term" value="P:symbiont-mediated suppression of host innate immune response"/>
    <property type="evidence" value="ECO:0007669"/>
    <property type="project" value="UniProtKB-KW"/>
</dbReference>
<dbReference type="GO" id="GO:0039502">
    <property type="term" value="P:symbiont-mediated suppression of host type I interferon-mediated signaling pathway"/>
    <property type="evidence" value="ECO:0007669"/>
    <property type="project" value="UniProtKB-UniRule"/>
</dbReference>
<dbReference type="Gene3D" id="3.30.160.330">
    <property type="match status" value="1"/>
</dbReference>
<dbReference type="HAMAP" id="MF_04004">
    <property type="entry name" value="PPV_E7"/>
    <property type="match status" value="1"/>
</dbReference>
<dbReference type="InterPro" id="IPR000148">
    <property type="entry name" value="Papilloma_E7"/>
</dbReference>
<dbReference type="Pfam" id="PF00527">
    <property type="entry name" value="E7"/>
    <property type="match status" value="1"/>
</dbReference>
<dbReference type="PIRSF" id="PIRSF003407">
    <property type="entry name" value="Papvi_E7"/>
    <property type="match status" value="1"/>
</dbReference>
<dbReference type="SUPFAM" id="SSF161234">
    <property type="entry name" value="E7 C-terminal domain-like"/>
    <property type="match status" value="1"/>
</dbReference>
<organismHost>
    <name type="scientific">Bos taurus</name>
    <name type="common">Bovine</name>
    <dbReference type="NCBI Taxonomy" id="9913"/>
</organismHost>